<sequence>MNEKKAVILLSGGLDSATVVAMARDEGYACYTMSFDYGQRHRAELQAAERVAKQLAVVEHKVIGLNLNGIGGSALTDTSIDVPEAPSEGIPVTYVPARNTVFLSLALGWAEVLGARDIFIGVNAVDYSGYPDCRPEFVAAFERMANLATKAGVEGQGFRIQAPLQNLSKAQIVRKGSRLGVDYAMTVSCYQADDDGRACGKCDSCRLRSAGFAEAGLADPTRYF</sequence>
<protein>
    <recommendedName>
        <fullName evidence="1">7-cyano-7-deazaguanine synthase</fullName>
        <ecNumber evidence="1">6.3.4.20</ecNumber>
    </recommendedName>
    <alternativeName>
        <fullName evidence="1">7-cyano-7-carbaguanine synthase</fullName>
    </alternativeName>
    <alternativeName>
        <fullName evidence="1">PreQ(0) synthase</fullName>
    </alternativeName>
    <alternativeName>
        <fullName evidence="1">Queuosine biosynthesis protein QueC</fullName>
    </alternativeName>
</protein>
<comment type="function">
    <text evidence="1">Catalyzes the ATP-dependent conversion of 7-carboxy-7-deazaguanine (CDG) to 7-cyano-7-deazaguanine (preQ(0)).</text>
</comment>
<comment type="catalytic activity">
    <reaction evidence="1">
        <text>7-carboxy-7-deazaguanine + NH4(+) + ATP = 7-cyano-7-deazaguanine + ADP + phosphate + H2O + H(+)</text>
        <dbReference type="Rhea" id="RHEA:27982"/>
        <dbReference type="ChEBI" id="CHEBI:15377"/>
        <dbReference type="ChEBI" id="CHEBI:15378"/>
        <dbReference type="ChEBI" id="CHEBI:28938"/>
        <dbReference type="ChEBI" id="CHEBI:30616"/>
        <dbReference type="ChEBI" id="CHEBI:43474"/>
        <dbReference type="ChEBI" id="CHEBI:45075"/>
        <dbReference type="ChEBI" id="CHEBI:61036"/>
        <dbReference type="ChEBI" id="CHEBI:456216"/>
        <dbReference type="EC" id="6.3.4.20"/>
    </reaction>
</comment>
<comment type="cofactor">
    <cofactor evidence="1">
        <name>Zn(2+)</name>
        <dbReference type="ChEBI" id="CHEBI:29105"/>
    </cofactor>
    <text evidence="1">Binds 1 zinc ion per subunit.</text>
</comment>
<comment type="pathway">
    <text evidence="1">Purine metabolism; 7-cyano-7-deazaguanine biosynthesis.</text>
</comment>
<comment type="similarity">
    <text evidence="1">Belongs to the QueC family.</text>
</comment>
<comment type="sequence caution" evidence="2">
    <conflict type="erroneous initiation">
        <sequence resource="EMBL-CDS" id="ABP80445"/>
    </conflict>
</comment>
<accession>A4VN94</accession>
<evidence type="ECO:0000255" key="1">
    <source>
        <dbReference type="HAMAP-Rule" id="MF_01633"/>
    </source>
</evidence>
<evidence type="ECO:0000305" key="2"/>
<name>QUEC_STUS1</name>
<keyword id="KW-0067">ATP-binding</keyword>
<keyword id="KW-0436">Ligase</keyword>
<keyword id="KW-0479">Metal-binding</keyword>
<keyword id="KW-0547">Nucleotide-binding</keyword>
<keyword id="KW-0671">Queuosine biosynthesis</keyword>
<keyword id="KW-1185">Reference proteome</keyword>
<keyword id="KW-0862">Zinc</keyword>
<dbReference type="EC" id="6.3.4.20" evidence="1"/>
<dbReference type="EMBL" id="CP000304">
    <property type="protein sequence ID" value="ABP80445.1"/>
    <property type="status" value="ALT_INIT"/>
    <property type="molecule type" value="Genomic_DNA"/>
</dbReference>
<dbReference type="RefSeq" id="WP_041755607.1">
    <property type="nucleotide sequence ID" value="NC_009434.1"/>
</dbReference>
<dbReference type="SMR" id="A4VN94"/>
<dbReference type="KEGG" id="psa:PST_2799"/>
<dbReference type="eggNOG" id="COG0603">
    <property type="taxonomic scope" value="Bacteria"/>
</dbReference>
<dbReference type="HOGENOM" id="CLU_081854_1_1_6"/>
<dbReference type="UniPathway" id="UPA00391"/>
<dbReference type="Proteomes" id="UP000000233">
    <property type="component" value="Chromosome"/>
</dbReference>
<dbReference type="GO" id="GO:0005524">
    <property type="term" value="F:ATP binding"/>
    <property type="evidence" value="ECO:0007669"/>
    <property type="project" value="UniProtKB-UniRule"/>
</dbReference>
<dbReference type="GO" id="GO:0016879">
    <property type="term" value="F:ligase activity, forming carbon-nitrogen bonds"/>
    <property type="evidence" value="ECO:0007669"/>
    <property type="project" value="UniProtKB-UniRule"/>
</dbReference>
<dbReference type="GO" id="GO:0008270">
    <property type="term" value="F:zinc ion binding"/>
    <property type="evidence" value="ECO:0007669"/>
    <property type="project" value="UniProtKB-UniRule"/>
</dbReference>
<dbReference type="GO" id="GO:0008616">
    <property type="term" value="P:queuosine biosynthetic process"/>
    <property type="evidence" value="ECO:0007669"/>
    <property type="project" value="UniProtKB-UniRule"/>
</dbReference>
<dbReference type="CDD" id="cd01995">
    <property type="entry name" value="QueC-like"/>
    <property type="match status" value="1"/>
</dbReference>
<dbReference type="FunFam" id="3.40.50.620:FF:000131">
    <property type="entry name" value="7-cyano-7-deazaguanine synthase"/>
    <property type="match status" value="1"/>
</dbReference>
<dbReference type="Gene3D" id="3.40.50.620">
    <property type="entry name" value="HUPs"/>
    <property type="match status" value="1"/>
</dbReference>
<dbReference type="HAMAP" id="MF_01633">
    <property type="entry name" value="QueC"/>
    <property type="match status" value="1"/>
</dbReference>
<dbReference type="InterPro" id="IPR018317">
    <property type="entry name" value="QueC"/>
</dbReference>
<dbReference type="InterPro" id="IPR014729">
    <property type="entry name" value="Rossmann-like_a/b/a_fold"/>
</dbReference>
<dbReference type="NCBIfam" id="TIGR00364">
    <property type="entry name" value="7-cyano-7-deazaguanine synthase QueC"/>
    <property type="match status" value="1"/>
</dbReference>
<dbReference type="PANTHER" id="PTHR42914">
    <property type="entry name" value="7-CYANO-7-DEAZAGUANINE SYNTHASE"/>
    <property type="match status" value="1"/>
</dbReference>
<dbReference type="PANTHER" id="PTHR42914:SF1">
    <property type="entry name" value="7-CYANO-7-DEAZAGUANINE SYNTHASE"/>
    <property type="match status" value="1"/>
</dbReference>
<dbReference type="Pfam" id="PF06508">
    <property type="entry name" value="QueC"/>
    <property type="match status" value="1"/>
</dbReference>
<dbReference type="PIRSF" id="PIRSF006293">
    <property type="entry name" value="ExsB"/>
    <property type="match status" value="1"/>
</dbReference>
<dbReference type="SUPFAM" id="SSF52402">
    <property type="entry name" value="Adenine nucleotide alpha hydrolases-like"/>
    <property type="match status" value="1"/>
</dbReference>
<gene>
    <name evidence="1" type="primary">queC</name>
    <name type="ordered locus">PST_2799</name>
</gene>
<reference key="1">
    <citation type="journal article" date="2008" name="Proc. Natl. Acad. Sci. U.S.A.">
        <title>Nitrogen fixation island and rhizosphere competence traits in the genome of root-associated Pseudomonas stutzeri A1501.</title>
        <authorList>
            <person name="Yan Y."/>
            <person name="Yang J."/>
            <person name="Dou Y."/>
            <person name="Chen M."/>
            <person name="Ping S."/>
            <person name="Peng J."/>
            <person name="Lu W."/>
            <person name="Zhang W."/>
            <person name="Yao Z."/>
            <person name="Li H."/>
            <person name="Liu W."/>
            <person name="He S."/>
            <person name="Geng L."/>
            <person name="Zhang X."/>
            <person name="Yang F."/>
            <person name="Yu H."/>
            <person name="Zhan Y."/>
            <person name="Li D."/>
            <person name="Lin Z."/>
            <person name="Wang Y."/>
            <person name="Elmerich C."/>
            <person name="Lin M."/>
            <person name="Jin Q."/>
        </authorList>
    </citation>
    <scope>NUCLEOTIDE SEQUENCE [LARGE SCALE GENOMIC DNA]</scope>
    <source>
        <strain>A1501</strain>
    </source>
</reference>
<organism>
    <name type="scientific">Stutzerimonas stutzeri (strain A1501)</name>
    <name type="common">Pseudomonas stutzeri</name>
    <dbReference type="NCBI Taxonomy" id="379731"/>
    <lineage>
        <taxon>Bacteria</taxon>
        <taxon>Pseudomonadati</taxon>
        <taxon>Pseudomonadota</taxon>
        <taxon>Gammaproteobacteria</taxon>
        <taxon>Pseudomonadales</taxon>
        <taxon>Pseudomonadaceae</taxon>
        <taxon>Stutzerimonas</taxon>
    </lineage>
</organism>
<proteinExistence type="inferred from homology"/>
<feature type="chain" id="PRO_0000336938" description="7-cyano-7-deazaguanine synthase">
    <location>
        <begin position="1"/>
        <end position="224"/>
    </location>
</feature>
<feature type="binding site" evidence="1">
    <location>
        <begin position="10"/>
        <end position="20"/>
    </location>
    <ligand>
        <name>ATP</name>
        <dbReference type="ChEBI" id="CHEBI:30616"/>
    </ligand>
</feature>
<feature type="binding site" evidence="1">
    <location>
        <position position="189"/>
    </location>
    <ligand>
        <name>Zn(2+)</name>
        <dbReference type="ChEBI" id="CHEBI:29105"/>
    </ligand>
</feature>
<feature type="binding site" evidence="1">
    <location>
        <position position="199"/>
    </location>
    <ligand>
        <name>Zn(2+)</name>
        <dbReference type="ChEBI" id="CHEBI:29105"/>
    </ligand>
</feature>
<feature type="binding site" evidence="1">
    <location>
        <position position="202"/>
    </location>
    <ligand>
        <name>Zn(2+)</name>
        <dbReference type="ChEBI" id="CHEBI:29105"/>
    </ligand>
</feature>
<feature type="binding site" evidence="1">
    <location>
        <position position="205"/>
    </location>
    <ligand>
        <name>Zn(2+)</name>
        <dbReference type="ChEBI" id="CHEBI:29105"/>
    </ligand>
</feature>